<comment type="function">
    <text evidence="1">DNA-dependent RNA polymerase catalyzes the transcription of DNA into RNA using the four ribonucleoside triphosphates as substrates.</text>
</comment>
<comment type="catalytic activity">
    <reaction evidence="1">
        <text>RNA(n) + a ribonucleoside 5'-triphosphate = RNA(n+1) + diphosphate</text>
        <dbReference type="Rhea" id="RHEA:21248"/>
        <dbReference type="Rhea" id="RHEA-COMP:14527"/>
        <dbReference type="Rhea" id="RHEA-COMP:17342"/>
        <dbReference type="ChEBI" id="CHEBI:33019"/>
        <dbReference type="ChEBI" id="CHEBI:61557"/>
        <dbReference type="ChEBI" id="CHEBI:140395"/>
        <dbReference type="EC" id="2.7.7.6"/>
    </reaction>
</comment>
<comment type="cofactor">
    <cofactor evidence="1">
        <name>Mg(2+)</name>
        <dbReference type="ChEBI" id="CHEBI:18420"/>
    </cofactor>
    <text evidence="1">Binds 1 Mg(2+) ion per subunit.</text>
</comment>
<comment type="cofactor">
    <cofactor evidence="1">
        <name>Zn(2+)</name>
        <dbReference type="ChEBI" id="CHEBI:29105"/>
    </cofactor>
    <text evidence="1">Binds 2 Zn(2+) ions per subunit.</text>
</comment>
<comment type="subunit">
    <text evidence="1">The RNAP catalytic core consists of 2 alpha, 1 beta, 1 beta' and 1 omega subunit. When a sigma factor is associated with the core the holoenzyme is formed, which can initiate transcription.</text>
</comment>
<comment type="similarity">
    <text evidence="1">Belongs to the RNA polymerase beta' chain family.</text>
</comment>
<accession>Q5NPK4</accession>
<gene>
    <name evidence="1" type="primary">rpoC</name>
    <name type="ordered locus">ZMO0732</name>
</gene>
<proteinExistence type="inferred from homology"/>
<evidence type="ECO:0000255" key="1">
    <source>
        <dbReference type="HAMAP-Rule" id="MF_01322"/>
    </source>
</evidence>
<name>RPOC_ZYMMO</name>
<protein>
    <recommendedName>
        <fullName evidence="1">DNA-directed RNA polymerase subunit beta'</fullName>
        <shortName evidence="1">RNAP subunit beta'</shortName>
        <ecNumber evidence="1">2.7.7.6</ecNumber>
    </recommendedName>
    <alternativeName>
        <fullName evidence="1">RNA polymerase subunit beta'</fullName>
    </alternativeName>
    <alternativeName>
        <fullName evidence="1">Transcriptase subunit beta'</fullName>
    </alternativeName>
</protein>
<feature type="chain" id="PRO_0000225589" description="DNA-directed RNA polymerase subunit beta'">
    <location>
        <begin position="1"/>
        <end position="1391"/>
    </location>
</feature>
<feature type="binding site" evidence="1">
    <location>
        <position position="70"/>
    </location>
    <ligand>
        <name>Zn(2+)</name>
        <dbReference type="ChEBI" id="CHEBI:29105"/>
        <label>1</label>
    </ligand>
</feature>
<feature type="binding site" evidence="1">
    <location>
        <position position="72"/>
    </location>
    <ligand>
        <name>Zn(2+)</name>
        <dbReference type="ChEBI" id="CHEBI:29105"/>
        <label>1</label>
    </ligand>
</feature>
<feature type="binding site" evidence="1">
    <location>
        <position position="85"/>
    </location>
    <ligand>
        <name>Zn(2+)</name>
        <dbReference type="ChEBI" id="CHEBI:29105"/>
        <label>1</label>
    </ligand>
</feature>
<feature type="binding site" evidence="1">
    <location>
        <position position="88"/>
    </location>
    <ligand>
        <name>Zn(2+)</name>
        <dbReference type="ChEBI" id="CHEBI:29105"/>
        <label>1</label>
    </ligand>
</feature>
<feature type="binding site" evidence="1">
    <location>
        <position position="461"/>
    </location>
    <ligand>
        <name>Mg(2+)</name>
        <dbReference type="ChEBI" id="CHEBI:18420"/>
    </ligand>
</feature>
<feature type="binding site" evidence="1">
    <location>
        <position position="463"/>
    </location>
    <ligand>
        <name>Mg(2+)</name>
        <dbReference type="ChEBI" id="CHEBI:18420"/>
    </ligand>
</feature>
<feature type="binding site" evidence="1">
    <location>
        <position position="465"/>
    </location>
    <ligand>
        <name>Mg(2+)</name>
        <dbReference type="ChEBI" id="CHEBI:18420"/>
    </ligand>
</feature>
<feature type="binding site" evidence="1">
    <location>
        <position position="809"/>
    </location>
    <ligand>
        <name>Zn(2+)</name>
        <dbReference type="ChEBI" id="CHEBI:29105"/>
        <label>2</label>
    </ligand>
</feature>
<feature type="binding site" evidence="1">
    <location>
        <position position="882"/>
    </location>
    <ligand>
        <name>Zn(2+)</name>
        <dbReference type="ChEBI" id="CHEBI:29105"/>
        <label>2</label>
    </ligand>
</feature>
<feature type="binding site" evidence="1">
    <location>
        <position position="889"/>
    </location>
    <ligand>
        <name>Zn(2+)</name>
        <dbReference type="ChEBI" id="CHEBI:29105"/>
        <label>2</label>
    </ligand>
</feature>
<feature type="binding site" evidence="1">
    <location>
        <position position="892"/>
    </location>
    <ligand>
        <name>Zn(2+)</name>
        <dbReference type="ChEBI" id="CHEBI:29105"/>
        <label>2</label>
    </ligand>
</feature>
<keyword id="KW-0240">DNA-directed RNA polymerase</keyword>
<keyword id="KW-0460">Magnesium</keyword>
<keyword id="KW-0479">Metal-binding</keyword>
<keyword id="KW-0548">Nucleotidyltransferase</keyword>
<keyword id="KW-1185">Reference proteome</keyword>
<keyword id="KW-0804">Transcription</keyword>
<keyword id="KW-0808">Transferase</keyword>
<keyword id="KW-0862">Zinc</keyword>
<dbReference type="EC" id="2.7.7.6" evidence="1"/>
<dbReference type="EMBL" id="AE008692">
    <property type="protein sequence ID" value="AAV89356.2"/>
    <property type="molecule type" value="Genomic_DNA"/>
</dbReference>
<dbReference type="RefSeq" id="WP_011240615.1">
    <property type="nucleotide sequence ID" value="NZ_CP035711.1"/>
</dbReference>
<dbReference type="SMR" id="Q5NPK4"/>
<dbReference type="STRING" id="264203.ZMO0732"/>
<dbReference type="GeneID" id="79904097"/>
<dbReference type="KEGG" id="zmo:ZMO0732"/>
<dbReference type="eggNOG" id="COG0086">
    <property type="taxonomic scope" value="Bacteria"/>
</dbReference>
<dbReference type="HOGENOM" id="CLU_000524_3_1_5"/>
<dbReference type="Proteomes" id="UP000001173">
    <property type="component" value="Chromosome"/>
</dbReference>
<dbReference type="GO" id="GO:0000428">
    <property type="term" value="C:DNA-directed RNA polymerase complex"/>
    <property type="evidence" value="ECO:0007669"/>
    <property type="project" value="UniProtKB-KW"/>
</dbReference>
<dbReference type="GO" id="GO:0003677">
    <property type="term" value="F:DNA binding"/>
    <property type="evidence" value="ECO:0007669"/>
    <property type="project" value="UniProtKB-UniRule"/>
</dbReference>
<dbReference type="GO" id="GO:0003899">
    <property type="term" value="F:DNA-directed RNA polymerase activity"/>
    <property type="evidence" value="ECO:0007669"/>
    <property type="project" value="UniProtKB-UniRule"/>
</dbReference>
<dbReference type="GO" id="GO:0000287">
    <property type="term" value="F:magnesium ion binding"/>
    <property type="evidence" value="ECO:0007669"/>
    <property type="project" value="UniProtKB-UniRule"/>
</dbReference>
<dbReference type="GO" id="GO:0008270">
    <property type="term" value="F:zinc ion binding"/>
    <property type="evidence" value="ECO:0007669"/>
    <property type="project" value="UniProtKB-UniRule"/>
</dbReference>
<dbReference type="GO" id="GO:0006351">
    <property type="term" value="P:DNA-templated transcription"/>
    <property type="evidence" value="ECO:0007669"/>
    <property type="project" value="UniProtKB-UniRule"/>
</dbReference>
<dbReference type="CDD" id="cd02655">
    <property type="entry name" value="RNAP_beta'_C"/>
    <property type="match status" value="1"/>
</dbReference>
<dbReference type="CDD" id="cd01609">
    <property type="entry name" value="RNAP_beta'_N"/>
    <property type="match status" value="1"/>
</dbReference>
<dbReference type="FunFam" id="1.10.132.30:FF:000003">
    <property type="entry name" value="DNA-directed RNA polymerase subunit beta"/>
    <property type="match status" value="1"/>
</dbReference>
<dbReference type="FunFam" id="1.10.150.390:FF:000002">
    <property type="entry name" value="DNA-directed RNA polymerase subunit beta"/>
    <property type="match status" value="1"/>
</dbReference>
<dbReference type="FunFam" id="4.10.860.120:FF:000001">
    <property type="entry name" value="DNA-directed RNA polymerase subunit beta"/>
    <property type="match status" value="1"/>
</dbReference>
<dbReference type="Gene3D" id="1.10.132.30">
    <property type="match status" value="1"/>
</dbReference>
<dbReference type="Gene3D" id="1.10.150.390">
    <property type="match status" value="1"/>
</dbReference>
<dbReference type="Gene3D" id="1.10.1790.20">
    <property type="match status" value="1"/>
</dbReference>
<dbReference type="Gene3D" id="1.10.40.90">
    <property type="match status" value="1"/>
</dbReference>
<dbReference type="Gene3D" id="2.40.40.20">
    <property type="match status" value="1"/>
</dbReference>
<dbReference type="Gene3D" id="2.40.50.100">
    <property type="match status" value="3"/>
</dbReference>
<dbReference type="Gene3D" id="4.10.860.120">
    <property type="entry name" value="RNA polymerase II, clamp domain"/>
    <property type="match status" value="1"/>
</dbReference>
<dbReference type="Gene3D" id="1.10.274.100">
    <property type="entry name" value="RNA polymerase Rpb1, domain 3"/>
    <property type="match status" value="1"/>
</dbReference>
<dbReference type="HAMAP" id="MF_01322">
    <property type="entry name" value="RNApol_bact_RpoC"/>
    <property type="match status" value="1"/>
</dbReference>
<dbReference type="InterPro" id="IPR045867">
    <property type="entry name" value="DNA-dir_RpoC_beta_prime"/>
</dbReference>
<dbReference type="InterPro" id="IPR012754">
    <property type="entry name" value="DNA-dir_RpoC_beta_prime_bact"/>
</dbReference>
<dbReference type="InterPro" id="IPR000722">
    <property type="entry name" value="RNA_pol_asu"/>
</dbReference>
<dbReference type="InterPro" id="IPR006592">
    <property type="entry name" value="RNA_pol_N"/>
</dbReference>
<dbReference type="InterPro" id="IPR007080">
    <property type="entry name" value="RNA_pol_Rpb1_1"/>
</dbReference>
<dbReference type="InterPro" id="IPR007066">
    <property type="entry name" value="RNA_pol_Rpb1_3"/>
</dbReference>
<dbReference type="InterPro" id="IPR042102">
    <property type="entry name" value="RNA_pol_Rpb1_3_sf"/>
</dbReference>
<dbReference type="InterPro" id="IPR007083">
    <property type="entry name" value="RNA_pol_Rpb1_4"/>
</dbReference>
<dbReference type="InterPro" id="IPR007081">
    <property type="entry name" value="RNA_pol_Rpb1_5"/>
</dbReference>
<dbReference type="InterPro" id="IPR044893">
    <property type="entry name" value="RNA_pol_Rpb1_clamp_domain"/>
</dbReference>
<dbReference type="InterPro" id="IPR038120">
    <property type="entry name" value="Rpb1_funnel_sf"/>
</dbReference>
<dbReference type="NCBIfam" id="TIGR02386">
    <property type="entry name" value="rpoC_TIGR"/>
    <property type="match status" value="1"/>
</dbReference>
<dbReference type="PANTHER" id="PTHR19376">
    <property type="entry name" value="DNA-DIRECTED RNA POLYMERASE"/>
    <property type="match status" value="1"/>
</dbReference>
<dbReference type="PANTHER" id="PTHR19376:SF54">
    <property type="entry name" value="DNA-DIRECTED RNA POLYMERASE SUBUNIT BETA"/>
    <property type="match status" value="1"/>
</dbReference>
<dbReference type="Pfam" id="PF04997">
    <property type="entry name" value="RNA_pol_Rpb1_1"/>
    <property type="match status" value="1"/>
</dbReference>
<dbReference type="Pfam" id="PF00623">
    <property type="entry name" value="RNA_pol_Rpb1_2"/>
    <property type="match status" value="1"/>
</dbReference>
<dbReference type="Pfam" id="PF04983">
    <property type="entry name" value="RNA_pol_Rpb1_3"/>
    <property type="match status" value="1"/>
</dbReference>
<dbReference type="Pfam" id="PF05000">
    <property type="entry name" value="RNA_pol_Rpb1_4"/>
    <property type="match status" value="1"/>
</dbReference>
<dbReference type="Pfam" id="PF04998">
    <property type="entry name" value="RNA_pol_Rpb1_5"/>
    <property type="match status" value="1"/>
</dbReference>
<dbReference type="SMART" id="SM00663">
    <property type="entry name" value="RPOLA_N"/>
    <property type="match status" value="1"/>
</dbReference>
<dbReference type="SUPFAM" id="SSF64484">
    <property type="entry name" value="beta and beta-prime subunits of DNA dependent RNA-polymerase"/>
    <property type="match status" value="1"/>
</dbReference>
<organism>
    <name type="scientific">Zymomonas mobilis subsp. mobilis (strain ATCC 31821 / ZM4 / CP4)</name>
    <dbReference type="NCBI Taxonomy" id="264203"/>
    <lineage>
        <taxon>Bacteria</taxon>
        <taxon>Pseudomonadati</taxon>
        <taxon>Pseudomonadota</taxon>
        <taxon>Alphaproteobacteria</taxon>
        <taxon>Sphingomonadales</taxon>
        <taxon>Zymomonadaceae</taxon>
        <taxon>Zymomonas</taxon>
    </lineage>
</organism>
<reference key="1">
    <citation type="journal article" date="2005" name="Nat. Biotechnol.">
        <title>The genome sequence of the ethanologenic bacterium Zymomonas mobilis ZM4.</title>
        <authorList>
            <person name="Seo J.-S."/>
            <person name="Chong H."/>
            <person name="Park H.S."/>
            <person name="Yoon K.-O."/>
            <person name="Jung C."/>
            <person name="Kim J.J."/>
            <person name="Hong J.H."/>
            <person name="Kim H."/>
            <person name="Kim J.-H."/>
            <person name="Kil J.-I."/>
            <person name="Park C.J."/>
            <person name="Oh H.-M."/>
            <person name="Lee J.-S."/>
            <person name="Jin S.-J."/>
            <person name="Um H.-W."/>
            <person name="Lee H.-J."/>
            <person name="Oh S.-J."/>
            <person name="Kim J.Y."/>
            <person name="Kang H.L."/>
            <person name="Lee S.Y."/>
            <person name="Lee K.J."/>
            <person name="Kang H.S."/>
        </authorList>
    </citation>
    <scope>NUCLEOTIDE SEQUENCE [LARGE SCALE GENOMIC DNA]</scope>
    <source>
        <strain>ATCC 31821 / ZM4 / CP4</strain>
    </source>
</reference>
<reference key="2">
    <citation type="journal article" date="2009" name="Nat. Biotechnol.">
        <title>Improved genome annotation for Zymomonas mobilis.</title>
        <authorList>
            <person name="Yang S."/>
            <person name="Pappas K.M."/>
            <person name="Hauser L.J."/>
            <person name="Land M.L."/>
            <person name="Chen G.L."/>
            <person name="Hurst G.B."/>
            <person name="Pan C."/>
            <person name="Kouvelis V.N."/>
            <person name="Typas M.A."/>
            <person name="Pelletier D.A."/>
            <person name="Klingeman D.M."/>
            <person name="Chang Y.J."/>
            <person name="Samatova N.F."/>
            <person name="Brown S.D."/>
        </authorList>
    </citation>
    <scope>SEQUENCE REVISION TO 708-714</scope>
</reference>
<sequence>MNELANFANPLASTEHFDHIQISLASPERIRSWSFGEIKKPETINYRTFKPERDGLFCARIFGPIKDYECLCGKYKRMKYKGIVCEKCGVEVTVSKVRRERMGHIELAAPVAHIWFLKSLPSRIGLLLDMQLKQLERVLYFESYIVIEPGLTPLKKFQLLTEDELLEAQDQYGEDSFSAGIGAEAVKKLLEALDLETEREDLLEELKHTKSELKPKKIIKRLKVVESFIESGNRPEWMILEVIPVIPPELRPLVPLDGGRFATSDLNDLYRRVINRNNRLKRLMDLRAPDIIVRNEKRMLQEAVDALFDNGRRGRTITGGNKRPLKSLSDMLKGKQGRFRQNLLGKRVDYSGRSVITTGPELKLHQCGLPKKMALELFKPFIYSRLDAKGLSMTLKQAKKWVEKERKEVWDILEEVIREHPVMLNRAPTLHRLGIQAFEPVLIEGKAIQLHPLVCSAFNADFDGDQMAVHVPLSLEAQLEARVLMMSTNNILSPANGKPIIVPSQDMVLGIYYLSMLKENEPGEGMRLSNMTEVHQALNVGAVTLHSKIISRVPQVNEQGETYMKRVETTPGRMLLGETLPQNYKVPFETINRLLTKKDIADVIDTVYRHTGQKDTVLFADAIMSLGFKYACKAGISFGKDDMIVPAAKEALVEETRALVQDFEQQYQDGLITQQEKYNKVIDAWSRCGDRVAGEMMKEIQMVHKGPDGRELPVNAIYMMAHSGARGSAAQIKQLAGMRGLMAKPSGEIIETPIISNFKEGLTVLEYFNSTHGARKGLADTALKTANSGYLTRRLVDVSQDCVVVEDDCGTERALEMKAITQGGNVIASLGERILGRTLAEDIMGTDGQVAIPIGTLLDEAHIAVIEKIGIQSVKIRSPLVCESHGGVCAACYGRDLARGTPVNIGEAVGVIAAQSIGEPGTQLTMRTFHIGGAAQLNEQSHLEAVTDGRLQFRDLRTIIDPQGKQIALSRTGEVVLVGTDGRELASSRILLGAHLLHNDGDMVKKGDRLAEWDPFTIPVITESAGIVKYQDLVENQTLTEQVDEATGISQRVVIEYRAPRGKEDLRPRLTLMNGDSGETARYMLSPGTVISVDDGQEVLAGTVLARVSRESAKTRDITGGLPRVAELFEARKPKENAIIAKVSGRVEFGKDYKAKRKVIIRPDDGSEPIEYLVPKSKVIDAQEGDHVKRGDNLISGSPDPHDILEVLGVEALAEYLVSEIQEVYRLQGVKINDKHIETIVRQMLLKVEITHAGDSIFLPGEQVEKEDFEAVNAKLESQGQEPAQATPILLGITKASLQTRSFISAASFQETTRVLTEAAVQGKIDTLSGLKENVIVGRLIPAGTGAAMKRLRVTANSRDAALRAANKAVNFEQPTIAIESDNTDTPDAAE</sequence>